<organism>
    <name type="scientific">Lachnospira eligens (strain ATCC 27750 / DSM 3376 / VPI C15-48 / C15-B4)</name>
    <name type="common">Eubacterium eligens</name>
    <dbReference type="NCBI Taxonomy" id="515620"/>
    <lineage>
        <taxon>Bacteria</taxon>
        <taxon>Bacillati</taxon>
        <taxon>Bacillota</taxon>
        <taxon>Clostridia</taxon>
        <taxon>Lachnospirales</taxon>
        <taxon>Lachnospiraceae</taxon>
        <taxon>Lachnospira</taxon>
    </lineage>
</organism>
<keyword id="KW-0131">Cell cycle</keyword>
<keyword id="KW-0132">Cell division</keyword>
<keyword id="KW-0238">DNA-binding</keyword>
<keyword id="KW-1185">Reference proteome</keyword>
<gene>
    <name evidence="1" type="primary">whiA</name>
    <name type="ordered locus">EUBELI_01994</name>
</gene>
<feature type="chain" id="PRO_1000215255" description="Probable cell division protein WhiA">
    <location>
        <begin position="1"/>
        <end position="317"/>
    </location>
</feature>
<feature type="DNA-binding region" description="H-T-H motif" evidence="1">
    <location>
        <begin position="278"/>
        <end position="311"/>
    </location>
</feature>
<name>WHIA_LACE2</name>
<protein>
    <recommendedName>
        <fullName evidence="1">Probable cell division protein WhiA</fullName>
    </recommendedName>
</protein>
<accession>C4Z4T8</accession>
<dbReference type="EMBL" id="CP001104">
    <property type="protein sequence ID" value="ACR72977.1"/>
    <property type="molecule type" value="Genomic_DNA"/>
</dbReference>
<dbReference type="RefSeq" id="WP_012740209.1">
    <property type="nucleotide sequence ID" value="NC_012778.1"/>
</dbReference>
<dbReference type="SMR" id="C4Z4T8"/>
<dbReference type="STRING" id="515620.EUBELI_01994"/>
<dbReference type="GeneID" id="41356636"/>
<dbReference type="KEGG" id="eel:EUBELI_01994"/>
<dbReference type="eggNOG" id="COG1481">
    <property type="taxonomic scope" value="Bacteria"/>
</dbReference>
<dbReference type="HOGENOM" id="CLU_053282_0_0_9"/>
<dbReference type="Proteomes" id="UP000001476">
    <property type="component" value="Chromosome"/>
</dbReference>
<dbReference type="GO" id="GO:0003677">
    <property type="term" value="F:DNA binding"/>
    <property type="evidence" value="ECO:0007669"/>
    <property type="project" value="UniProtKB-UniRule"/>
</dbReference>
<dbReference type="GO" id="GO:0051301">
    <property type="term" value="P:cell division"/>
    <property type="evidence" value="ECO:0007669"/>
    <property type="project" value="UniProtKB-UniRule"/>
</dbReference>
<dbReference type="GO" id="GO:0043937">
    <property type="term" value="P:regulation of sporulation"/>
    <property type="evidence" value="ECO:0007669"/>
    <property type="project" value="InterPro"/>
</dbReference>
<dbReference type="Gene3D" id="3.10.28.10">
    <property type="entry name" value="Homing endonucleases"/>
    <property type="match status" value="1"/>
</dbReference>
<dbReference type="HAMAP" id="MF_01420">
    <property type="entry name" value="HTH_type_WhiA"/>
    <property type="match status" value="1"/>
</dbReference>
<dbReference type="InterPro" id="IPR027434">
    <property type="entry name" value="Homing_endonucl"/>
</dbReference>
<dbReference type="InterPro" id="IPR018478">
    <property type="entry name" value="Sporu_reg_WhiA_N_dom"/>
</dbReference>
<dbReference type="InterPro" id="IPR003802">
    <property type="entry name" value="Sporulation_regulator_WhiA"/>
</dbReference>
<dbReference type="InterPro" id="IPR023054">
    <property type="entry name" value="Sporulation_regulator_WhiA_C"/>
</dbReference>
<dbReference type="InterPro" id="IPR039518">
    <property type="entry name" value="WhiA_LAGLIDADG_dom"/>
</dbReference>
<dbReference type="NCBIfam" id="TIGR00647">
    <property type="entry name" value="DNA_bind_WhiA"/>
    <property type="match status" value="1"/>
</dbReference>
<dbReference type="PANTHER" id="PTHR37307">
    <property type="entry name" value="CELL DIVISION PROTEIN WHIA-RELATED"/>
    <property type="match status" value="1"/>
</dbReference>
<dbReference type="PANTHER" id="PTHR37307:SF1">
    <property type="entry name" value="CELL DIVISION PROTEIN WHIA-RELATED"/>
    <property type="match status" value="1"/>
</dbReference>
<dbReference type="Pfam" id="PF02650">
    <property type="entry name" value="HTH_WhiA"/>
    <property type="match status" value="1"/>
</dbReference>
<dbReference type="Pfam" id="PF14527">
    <property type="entry name" value="LAGLIDADG_WhiA"/>
    <property type="match status" value="1"/>
</dbReference>
<dbReference type="Pfam" id="PF10298">
    <property type="entry name" value="WhiA_N"/>
    <property type="match status" value="1"/>
</dbReference>
<dbReference type="SUPFAM" id="SSF55608">
    <property type="entry name" value="Homing endonucleases"/>
    <property type="match status" value="1"/>
</dbReference>
<evidence type="ECO:0000255" key="1">
    <source>
        <dbReference type="HAMAP-Rule" id="MF_01420"/>
    </source>
</evidence>
<proteinExistence type="inferred from homology"/>
<sequence length="317" mass="35770">MSFSSEVKEELVKKTDSARHCQIAEFAAFMGMSGNVSETDNGELCLEFVTENELSVEKFSDLLLRIFSIKMDADTNEMVKNGKETIIRITRQSDVAKILQTLKWCDDRFTQIEPVFVDARIVAMDCCKKAFIRGAFMERGSISDPNKFYHYEIVCKYEEDADILMDMLRFFGLDAKVIVRKNSFVVYMKEGNNITDTLNLMGAVVSQMNLYNVMILKGISNDVNRKVNCETANLNKTIEAAVKQIKDIELIRDTVGLDSLSDSLMQVALLRLENPDMSLQGLGELLDPQVGKSGVNHRLRKIGEKADELRQSMGISV</sequence>
<reference key="1">
    <citation type="journal article" date="2009" name="Proc. Natl. Acad. Sci. U.S.A.">
        <title>Characterizing a model human gut microbiota composed of members of its two dominant bacterial phyla.</title>
        <authorList>
            <person name="Mahowald M.A."/>
            <person name="Rey F.E."/>
            <person name="Seedorf H."/>
            <person name="Turnbaugh P.J."/>
            <person name="Fulton R.S."/>
            <person name="Wollam A."/>
            <person name="Shah N."/>
            <person name="Wang C."/>
            <person name="Magrini V."/>
            <person name="Wilson R.K."/>
            <person name="Cantarel B.L."/>
            <person name="Coutinho P.M."/>
            <person name="Henrissat B."/>
            <person name="Crock L.W."/>
            <person name="Russell A."/>
            <person name="Verberkmoes N.C."/>
            <person name="Hettich R.L."/>
            <person name="Gordon J.I."/>
        </authorList>
    </citation>
    <scope>NUCLEOTIDE SEQUENCE [LARGE SCALE GENOMIC DNA]</scope>
    <source>
        <strain>ATCC 27750 / DSM 3376 / VPI C15-48 / C15-B4</strain>
    </source>
</reference>
<comment type="function">
    <text evidence="1">Involved in cell division and chromosome segregation.</text>
</comment>
<comment type="similarity">
    <text evidence="1">Belongs to the WhiA family.</text>
</comment>